<feature type="chain" id="PRO_0000278320" description="Protein MCM10 homolog">
    <location>
        <begin position="1"/>
        <end position="875"/>
    </location>
</feature>
<feature type="region of interest" description="N-terminal domain" evidence="1">
    <location>
        <begin position="1"/>
        <end position="156"/>
    </location>
</feature>
<feature type="region of interest" description="Disordered" evidence="5">
    <location>
        <begin position="31"/>
        <end position="120"/>
    </location>
</feature>
<feature type="region of interest" description="Disordered" evidence="5">
    <location>
        <begin position="137"/>
        <end position="167"/>
    </location>
</feature>
<feature type="region of interest" description="Disordered" evidence="5">
    <location>
        <begin position="179"/>
        <end position="228"/>
    </location>
</feature>
<feature type="region of interest" description="OB-fold domain" evidence="1">
    <location>
        <begin position="238"/>
        <end position="389"/>
    </location>
</feature>
<feature type="region of interest" description="Zinc finger-like 1">
    <location>
        <begin position="390"/>
        <end position="415"/>
    </location>
</feature>
<feature type="region of interest" description="Disordered" evidence="5">
    <location>
        <begin position="567"/>
        <end position="630"/>
    </location>
</feature>
<feature type="region of interest" description="Zinc finger-like 2" evidence="1">
    <location>
        <begin position="783"/>
        <end position="802"/>
    </location>
</feature>
<feature type="region of interest" description="Zinc finger-like 3" evidence="1">
    <location>
        <begin position="816"/>
        <end position="836"/>
    </location>
</feature>
<feature type="coiled-coil region" evidence="4">
    <location>
        <begin position="104"/>
        <end position="142"/>
    </location>
</feature>
<feature type="compositionally biased region" description="Acidic residues" evidence="5">
    <location>
        <begin position="38"/>
        <end position="64"/>
    </location>
</feature>
<feature type="compositionally biased region" description="Acidic residues" evidence="5">
    <location>
        <begin position="80"/>
        <end position="90"/>
    </location>
</feature>
<feature type="compositionally biased region" description="Basic and acidic residues" evidence="5">
    <location>
        <begin position="106"/>
        <end position="120"/>
    </location>
</feature>
<feature type="compositionally biased region" description="Basic and acidic residues" evidence="5">
    <location>
        <begin position="151"/>
        <end position="167"/>
    </location>
</feature>
<feature type="compositionally biased region" description="Polar residues" evidence="5">
    <location>
        <begin position="206"/>
        <end position="224"/>
    </location>
</feature>
<feature type="compositionally biased region" description="Basic and acidic residues" evidence="5">
    <location>
        <begin position="568"/>
        <end position="582"/>
    </location>
</feature>
<feature type="compositionally biased region" description="Low complexity" evidence="5">
    <location>
        <begin position="587"/>
        <end position="603"/>
    </location>
</feature>
<feature type="modified residue" description="Phosphothreonine" evidence="22 23 24">
    <location>
        <position position="85"/>
    </location>
</feature>
<feature type="modified residue" description="Phosphoserine" evidence="23">
    <location>
        <position position="93"/>
    </location>
</feature>
<feature type="modified residue" description="Phosphoserine" evidence="2">
    <location>
        <position position="644"/>
    </location>
</feature>
<feature type="cross-link" description="Glycyl lysine isopeptide (Lys-Gly) (interchain with G-Cter in SUMO2)" evidence="26">
    <location>
        <position position="493"/>
    </location>
</feature>
<feature type="cross-link" description="Glycyl lysine isopeptide (Lys-Gly) (interchain with G-Cter in SUMO2)" evidence="26">
    <location>
        <position position="627"/>
    </location>
</feature>
<feature type="cross-link" description="Glycyl lysine isopeptide (Lys-Gly) (interchain with G-Cter in SUMO2)" evidence="25 26">
    <location>
        <position position="762"/>
    </location>
</feature>
<feature type="cross-link" description="Glycyl lysine isopeptide (Lys-Gly) (interchain with G-Cter in SUMO2)" evidence="26">
    <location>
        <position position="763"/>
    </location>
</feature>
<feature type="splice variant" id="VSP_029951" description="In isoform 2." evidence="18 19 20">
    <location>
        <position position="152"/>
    </location>
</feature>
<feature type="sequence variant" id="VAR_030771" description="In dbSNP:rs17152897." evidence="9">
    <original>K</original>
    <variation>R</variation>
    <location>
        <position position="134"/>
    </location>
</feature>
<feature type="sequence variant" id="VAR_053836" description="In dbSNP:rs34630110." evidence="7 9">
    <original>A</original>
    <variation>P</variation>
    <location>
        <position position="195"/>
    </location>
</feature>
<feature type="sequence variant" id="VAR_053837" description="In dbSNP:rs35114749.">
    <original>A</original>
    <variation>V</variation>
    <location>
        <position position="418"/>
    </location>
</feature>
<feature type="sequence variant" id="VAR_085769" description="In IMD80; no effect on the formation of the replisome; dbSNP:rs746874909." evidence="17">
    <original>R</original>
    <variation>C</variation>
    <location>
        <position position="427"/>
    </location>
</feature>
<feature type="sequence variant" id="VAR_030772" description="In dbSNP:rs7905784." evidence="7 11">
    <original>T</original>
    <variation>S</variation>
    <location>
        <position position="541"/>
    </location>
</feature>
<feature type="sequence variant" id="VAR_085770" description="In IMD80; cell cycle defect and replication stress in patient-derived cells; loss of nuclear localization." evidence="17">
    <location>
        <begin position="583"/>
        <end position="875"/>
    </location>
</feature>
<feature type="sequence variant" id="VAR_030773" description="In dbSNP:rs2274110." evidence="11">
    <original>K</original>
    <variation>R</variation>
    <location>
        <position position="669"/>
    </location>
</feature>
<feature type="sequence conflict" description="In Ref. 3; BAB70988." evidence="21" ref="3">
    <original>K</original>
    <variation>R</variation>
    <location>
        <position position="303"/>
    </location>
</feature>
<organism>
    <name type="scientific">Homo sapiens</name>
    <name type="common">Human</name>
    <dbReference type="NCBI Taxonomy" id="9606"/>
    <lineage>
        <taxon>Eukaryota</taxon>
        <taxon>Metazoa</taxon>
        <taxon>Chordata</taxon>
        <taxon>Craniata</taxon>
        <taxon>Vertebrata</taxon>
        <taxon>Euteleostomi</taxon>
        <taxon>Mammalia</taxon>
        <taxon>Eutheria</taxon>
        <taxon>Euarchontoglires</taxon>
        <taxon>Primates</taxon>
        <taxon>Haplorrhini</taxon>
        <taxon>Catarrhini</taxon>
        <taxon>Hominidae</taxon>
        <taxon>Homo</taxon>
    </lineage>
</organism>
<evidence type="ECO:0000250" key="1"/>
<evidence type="ECO:0000250" key="2">
    <source>
        <dbReference type="UniProtKB" id="Q0VBD2"/>
    </source>
</evidence>
<evidence type="ECO:0000250" key="3">
    <source>
        <dbReference type="UniProtKB" id="Q5EAW4"/>
    </source>
</evidence>
<evidence type="ECO:0000255" key="4"/>
<evidence type="ECO:0000256" key="5">
    <source>
        <dbReference type="SAM" id="MobiDB-lite"/>
    </source>
</evidence>
<evidence type="ECO:0000269" key="6">
    <source>
    </source>
</evidence>
<evidence type="ECO:0000269" key="7">
    <source>
    </source>
</evidence>
<evidence type="ECO:0000269" key="8">
    <source>
    </source>
</evidence>
<evidence type="ECO:0000269" key="9">
    <source>
    </source>
</evidence>
<evidence type="ECO:0000269" key="10">
    <source>
    </source>
</evidence>
<evidence type="ECO:0000269" key="11">
    <source>
    </source>
</evidence>
<evidence type="ECO:0000269" key="12">
    <source>
    </source>
</evidence>
<evidence type="ECO:0000269" key="13">
    <source>
    </source>
</evidence>
<evidence type="ECO:0000269" key="14">
    <source>
    </source>
</evidence>
<evidence type="ECO:0000269" key="15">
    <source>
    </source>
</evidence>
<evidence type="ECO:0000269" key="16">
    <source>
    </source>
</evidence>
<evidence type="ECO:0000269" key="17">
    <source>
    </source>
</evidence>
<evidence type="ECO:0000303" key="18">
    <source>
    </source>
</evidence>
<evidence type="ECO:0000303" key="19">
    <source>
    </source>
</evidence>
<evidence type="ECO:0000303" key="20">
    <source>
    </source>
</evidence>
<evidence type="ECO:0000305" key="21"/>
<evidence type="ECO:0007744" key="22">
    <source>
    </source>
</evidence>
<evidence type="ECO:0007744" key="23">
    <source>
    </source>
</evidence>
<evidence type="ECO:0007744" key="24">
    <source>
    </source>
</evidence>
<evidence type="ECO:0007744" key="25">
    <source>
    </source>
</evidence>
<evidence type="ECO:0007744" key="26">
    <source>
    </source>
</evidence>
<reference key="1">
    <citation type="journal article" date="2000" name="Nucleic Acids Res.">
        <title>The human homolog of Saccharomyces cerevisiae Mcm10 interacts with replication factors and dissociates from nuclease-resistant nuclear structures in G(2) phase.</title>
        <authorList>
            <person name="Izumi M."/>
            <person name="Yanagi K."/>
            <person name="Mizuno T."/>
            <person name="Yokoi M."/>
            <person name="Kawasaki Y."/>
            <person name="Moon K.Y."/>
            <person name="Hurwitz J."/>
            <person name="Yatagai F."/>
            <person name="Hanaoka F."/>
        </authorList>
    </citation>
    <scope>NUCLEOTIDE SEQUENCE [MRNA] (ISOFORM 2)</scope>
    <scope>SUBCELLULAR LOCATION</scope>
    <scope>FUNCTION</scope>
    <scope>DEVELOPMENTAL STAGE</scope>
    <scope>INTERACTION WITH ORC2; MCM2 AND MCM6</scope>
</reference>
<reference key="2">
    <citation type="journal article" date="2001" name="Genome Res.">
        <title>Towards a catalog of human genes and proteins: sequencing and analysis of 500 novel complete protein coding human cDNAs.</title>
        <authorList>
            <person name="Wiemann S."/>
            <person name="Weil B."/>
            <person name="Wellenreuther R."/>
            <person name="Gassenhuber J."/>
            <person name="Glassl S."/>
            <person name="Ansorge W."/>
            <person name="Boecher M."/>
            <person name="Bloecker H."/>
            <person name="Bauersachs S."/>
            <person name="Blum H."/>
            <person name="Lauber J."/>
            <person name="Duesterhoeft A."/>
            <person name="Beyer A."/>
            <person name="Koehrer K."/>
            <person name="Strack N."/>
            <person name="Mewes H.-W."/>
            <person name="Ottenwaelder B."/>
            <person name="Obermaier B."/>
            <person name="Tampe J."/>
            <person name="Heubner D."/>
            <person name="Wambutt R."/>
            <person name="Korn B."/>
            <person name="Klein M."/>
            <person name="Poustka A."/>
        </authorList>
    </citation>
    <scope>NUCLEOTIDE SEQUENCE [LARGE SCALE MRNA] (ISOFORM 2)</scope>
    <scope>VARIANTS PRO-195 AND SER-541</scope>
    <source>
        <tissue>Testis</tissue>
    </source>
</reference>
<reference key="3">
    <citation type="journal article" date="2004" name="Nat. Genet.">
        <title>Complete sequencing and characterization of 21,243 full-length human cDNAs.</title>
        <authorList>
            <person name="Ota T."/>
            <person name="Suzuki Y."/>
            <person name="Nishikawa T."/>
            <person name="Otsuki T."/>
            <person name="Sugiyama T."/>
            <person name="Irie R."/>
            <person name="Wakamatsu A."/>
            <person name="Hayashi K."/>
            <person name="Sato H."/>
            <person name="Nagai K."/>
            <person name="Kimura K."/>
            <person name="Makita H."/>
            <person name="Sekine M."/>
            <person name="Obayashi M."/>
            <person name="Nishi T."/>
            <person name="Shibahara T."/>
            <person name="Tanaka T."/>
            <person name="Ishii S."/>
            <person name="Yamamoto J."/>
            <person name="Saito K."/>
            <person name="Kawai Y."/>
            <person name="Isono Y."/>
            <person name="Nakamura Y."/>
            <person name="Nagahari K."/>
            <person name="Murakami K."/>
            <person name="Yasuda T."/>
            <person name="Iwayanagi T."/>
            <person name="Wagatsuma M."/>
            <person name="Shiratori A."/>
            <person name="Sudo H."/>
            <person name="Hosoiri T."/>
            <person name="Kaku Y."/>
            <person name="Kodaira H."/>
            <person name="Kondo H."/>
            <person name="Sugawara M."/>
            <person name="Takahashi M."/>
            <person name="Kanda K."/>
            <person name="Yokoi T."/>
            <person name="Furuya T."/>
            <person name="Kikkawa E."/>
            <person name="Omura Y."/>
            <person name="Abe K."/>
            <person name="Kamihara K."/>
            <person name="Katsuta N."/>
            <person name="Sato K."/>
            <person name="Tanikawa M."/>
            <person name="Yamazaki M."/>
            <person name="Ninomiya K."/>
            <person name="Ishibashi T."/>
            <person name="Yamashita H."/>
            <person name="Murakawa K."/>
            <person name="Fujimori K."/>
            <person name="Tanai H."/>
            <person name="Kimata M."/>
            <person name="Watanabe M."/>
            <person name="Hiraoka S."/>
            <person name="Chiba Y."/>
            <person name="Ishida S."/>
            <person name="Ono Y."/>
            <person name="Takiguchi S."/>
            <person name="Watanabe S."/>
            <person name="Yosida M."/>
            <person name="Hotuta T."/>
            <person name="Kusano J."/>
            <person name="Kanehori K."/>
            <person name="Takahashi-Fujii A."/>
            <person name="Hara H."/>
            <person name="Tanase T.-O."/>
            <person name="Nomura Y."/>
            <person name="Togiya S."/>
            <person name="Komai F."/>
            <person name="Hara R."/>
            <person name="Takeuchi K."/>
            <person name="Arita M."/>
            <person name="Imose N."/>
            <person name="Musashino K."/>
            <person name="Yuuki H."/>
            <person name="Oshima A."/>
            <person name="Sasaki N."/>
            <person name="Aotsuka S."/>
            <person name="Yoshikawa Y."/>
            <person name="Matsunawa H."/>
            <person name="Ichihara T."/>
            <person name="Shiohata N."/>
            <person name="Sano S."/>
            <person name="Moriya S."/>
            <person name="Momiyama H."/>
            <person name="Satoh N."/>
            <person name="Takami S."/>
            <person name="Terashima Y."/>
            <person name="Suzuki O."/>
            <person name="Nakagawa S."/>
            <person name="Senoh A."/>
            <person name="Mizoguchi H."/>
            <person name="Goto Y."/>
            <person name="Shimizu F."/>
            <person name="Wakebe H."/>
            <person name="Hishigaki H."/>
            <person name="Watanabe T."/>
            <person name="Sugiyama A."/>
            <person name="Takemoto M."/>
            <person name="Kawakami B."/>
            <person name="Yamazaki M."/>
            <person name="Watanabe K."/>
            <person name="Kumagai A."/>
            <person name="Itakura S."/>
            <person name="Fukuzumi Y."/>
            <person name="Fujimori Y."/>
            <person name="Komiyama M."/>
            <person name="Tashiro H."/>
            <person name="Tanigami A."/>
            <person name="Fujiwara T."/>
            <person name="Ono T."/>
            <person name="Yamada K."/>
            <person name="Fujii Y."/>
            <person name="Ozaki K."/>
            <person name="Hirao M."/>
            <person name="Ohmori Y."/>
            <person name="Kawabata A."/>
            <person name="Hikiji T."/>
            <person name="Kobatake N."/>
            <person name="Inagaki H."/>
            <person name="Ikema Y."/>
            <person name="Okamoto S."/>
            <person name="Okitani R."/>
            <person name="Kawakami T."/>
            <person name="Noguchi S."/>
            <person name="Itoh T."/>
            <person name="Shigeta K."/>
            <person name="Senba T."/>
            <person name="Matsumura K."/>
            <person name="Nakajima Y."/>
            <person name="Mizuno T."/>
            <person name="Morinaga M."/>
            <person name="Sasaki M."/>
            <person name="Togashi T."/>
            <person name="Oyama M."/>
            <person name="Hata H."/>
            <person name="Watanabe M."/>
            <person name="Komatsu T."/>
            <person name="Mizushima-Sugano J."/>
            <person name="Satoh T."/>
            <person name="Shirai Y."/>
            <person name="Takahashi Y."/>
            <person name="Nakagawa K."/>
            <person name="Okumura K."/>
            <person name="Nagase T."/>
            <person name="Nomura N."/>
            <person name="Kikuchi H."/>
            <person name="Masuho Y."/>
            <person name="Yamashita R."/>
            <person name="Nakai K."/>
            <person name="Yada T."/>
            <person name="Nakamura Y."/>
            <person name="Ohara O."/>
            <person name="Isogai T."/>
            <person name="Sugano S."/>
        </authorList>
    </citation>
    <scope>NUCLEOTIDE SEQUENCE [LARGE SCALE MRNA] (ISOFORM 1)</scope>
    <scope>VARIANTS ARG-134 AND PRO-195</scope>
    <source>
        <tissue>Thymus</tissue>
    </source>
</reference>
<reference key="4">
    <citation type="journal article" date="2004" name="Nature">
        <title>The DNA sequence and comparative analysis of human chromosome 10.</title>
        <authorList>
            <person name="Deloukas P."/>
            <person name="Earthrowl M.E."/>
            <person name="Grafham D.V."/>
            <person name="Rubenfield M."/>
            <person name="French L."/>
            <person name="Steward C.A."/>
            <person name="Sims S.K."/>
            <person name="Jones M.C."/>
            <person name="Searle S."/>
            <person name="Scott C."/>
            <person name="Howe K."/>
            <person name="Hunt S.E."/>
            <person name="Andrews T.D."/>
            <person name="Gilbert J.G.R."/>
            <person name="Swarbreck D."/>
            <person name="Ashurst J.L."/>
            <person name="Taylor A."/>
            <person name="Battles J."/>
            <person name="Bird C.P."/>
            <person name="Ainscough R."/>
            <person name="Almeida J.P."/>
            <person name="Ashwell R.I.S."/>
            <person name="Ambrose K.D."/>
            <person name="Babbage A.K."/>
            <person name="Bagguley C.L."/>
            <person name="Bailey J."/>
            <person name="Banerjee R."/>
            <person name="Bates K."/>
            <person name="Beasley H."/>
            <person name="Bray-Allen S."/>
            <person name="Brown A.J."/>
            <person name="Brown J.Y."/>
            <person name="Burford D.C."/>
            <person name="Burrill W."/>
            <person name="Burton J."/>
            <person name="Cahill P."/>
            <person name="Camire D."/>
            <person name="Carter N.P."/>
            <person name="Chapman J.C."/>
            <person name="Clark S.Y."/>
            <person name="Clarke G."/>
            <person name="Clee C.M."/>
            <person name="Clegg S."/>
            <person name="Corby N."/>
            <person name="Coulson A."/>
            <person name="Dhami P."/>
            <person name="Dutta I."/>
            <person name="Dunn M."/>
            <person name="Faulkner L."/>
            <person name="Frankish A."/>
            <person name="Frankland J.A."/>
            <person name="Garner P."/>
            <person name="Garnett J."/>
            <person name="Gribble S."/>
            <person name="Griffiths C."/>
            <person name="Grocock R."/>
            <person name="Gustafson E."/>
            <person name="Hammond S."/>
            <person name="Harley J.L."/>
            <person name="Hart E."/>
            <person name="Heath P.D."/>
            <person name="Ho T.P."/>
            <person name="Hopkins B."/>
            <person name="Horne J."/>
            <person name="Howden P.J."/>
            <person name="Huckle E."/>
            <person name="Hynds C."/>
            <person name="Johnson C."/>
            <person name="Johnson D."/>
            <person name="Kana A."/>
            <person name="Kay M."/>
            <person name="Kimberley A.M."/>
            <person name="Kershaw J.K."/>
            <person name="Kokkinaki M."/>
            <person name="Laird G.K."/>
            <person name="Lawlor S."/>
            <person name="Lee H.M."/>
            <person name="Leongamornlert D.A."/>
            <person name="Laird G."/>
            <person name="Lloyd C."/>
            <person name="Lloyd D.M."/>
            <person name="Loveland J."/>
            <person name="Lovell J."/>
            <person name="McLaren S."/>
            <person name="McLay K.E."/>
            <person name="McMurray A."/>
            <person name="Mashreghi-Mohammadi M."/>
            <person name="Matthews L."/>
            <person name="Milne S."/>
            <person name="Nickerson T."/>
            <person name="Nguyen M."/>
            <person name="Overton-Larty E."/>
            <person name="Palmer S.A."/>
            <person name="Pearce A.V."/>
            <person name="Peck A.I."/>
            <person name="Pelan S."/>
            <person name="Phillimore B."/>
            <person name="Porter K."/>
            <person name="Rice C.M."/>
            <person name="Rogosin A."/>
            <person name="Ross M.T."/>
            <person name="Sarafidou T."/>
            <person name="Sehra H.K."/>
            <person name="Shownkeen R."/>
            <person name="Skuce C.D."/>
            <person name="Smith M."/>
            <person name="Standring L."/>
            <person name="Sycamore N."/>
            <person name="Tester J."/>
            <person name="Thorpe A."/>
            <person name="Torcasso W."/>
            <person name="Tracey A."/>
            <person name="Tromans A."/>
            <person name="Tsolas J."/>
            <person name="Wall M."/>
            <person name="Walsh J."/>
            <person name="Wang H."/>
            <person name="Weinstock K."/>
            <person name="West A.P."/>
            <person name="Willey D.L."/>
            <person name="Whitehead S.L."/>
            <person name="Wilming L."/>
            <person name="Wray P.W."/>
            <person name="Young L."/>
            <person name="Chen Y."/>
            <person name="Lovering R.C."/>
            <person name="Moschonas N.K."/>
            <person name="Siebert R."/>
            <person name="Fechtel K."/>
            <person name="Bentley D."/>
            <person name="Durbin R.M."/>
            <person name="Hubbard T."/>
            <person name="Doucette-Stamm L."/>
            <person name="Beck S."/>
            <person name="Smith D.R."/>
            <person name="Rogers J."/>
        </authorList>
    </citation>
    <scope>NUCLEOTIDE SEQUENCE [LARGE SCALE GENOMIC DNA]</scope>
</reference>
<reference key="5">
    <citation type="submission" date="2005-09" db="EMBL/GenBank/DDBJ databases">
        <authorList>
            <person name="Mural R.J."/>
            <person name="Istrail S."/>
            <person name="Sutton G.G."/>
            <person name="Florea L."/>
            <person name="Halpern A.L."/>
            <person name="Mobarry C.M."/>
            <person name="Lippert R."/>
            <person name="Walenz B."/>
            <person name="Shatkay H."/>
            <person name="Dew I."/>
            <person name="Miller J.R."/>
            <person name="Flanigan M.J."/>
            <person name="Edwards N.J."/>
            <person name="Bolanos R."/>
            <person name="Fasulo D."/>
            <person name="Halldorsson B.V."/>
            <person name="Hannenhalli S."/>
            <person name="Turner R."/>
            <person name="Yooseph S."/>
            <person name="Lu F."/>
            <person name="Nusskern D.R."/>
            <person name="Shue B.C."/>
            <person name="Zheng X.H."/>
            <person name="Zhong F."/>
            <person name="Delcher A.L."/>
            <person name="Huson D.H."/>
            <person name="Kravitz S.A."/>
            <person name="Mouchard L."/>
            <person name="Reinert K."/>
            <person name="Remington K.A."/>
            <person name="Clark A.G."/>
            <person name="Waterman M.S."/>
            <person name="Eichler E.E."/>
            <person name="Adams M.D."/>
            <person name="Hunkapiller M.W."/>
            <person name="Myers E.W."/>
            <person name="Venter J.C."/>
        </authorList>
    </citation>
    <scope>NUCLEOTIDE SEQUENCE [LARGE SCALE GENOMIC DNA]</scope>
</reference>
<reference key="6">
    <citation type="journal article" date="2004" name="Genome Res.">
        <title>The status, quality, and expansion of the NIH full-length cDNA project: the Mammalian Gene Collection (MGC).</title>
        <authorList>
            <consortium name="The MGC Project Team"/>
        </authorList>
    </citation>
    <scope>NUCLEOTIDE SEQUENCE [LARGE SCALE MRNA] (ISOFORMS 1 AND 2)</scope>
    <scope>VARIANTS SER-541 AND ARG-669</scope>
    <source>
        <tissue>Liver</tissue>
        <tissue>Lymph</tissue>
        <tissue>Placenta</tissue>
    </source>
</reference>
<reference key="7">
    <citation type="submission" date="1999-01" db="EMBL/GenBank/DDBJ databases">
        <authorList>
            <person name="Zhang C."/>
            <person name="Yu Y."/>
            <person name="Zhang S."/>
            <person name="Wei H."/>
            <person name="Zhang Y."/>
            <person name="Zhou G."/>
            <person name="Bi J."/>
            <person name="Liu M."/>
            <person name="He F."/>
        </authorList>
    </citation>
    <scope>NUCLEOTIDE SEQUENCE [LARGE SCALE MRNA] OF 517-875</scope>
    <source>
        <tissue>Fetal liver</tissue>
    </source>
</reference>
<reference key="8">
    <citation type="journal article" date="2001" name="J. Biol. Chem.">
        <title>Cell cycle-dependent proteolysis and phosphorylation of human Mcm10.</title>
        <authorList>
            <person name="Izumi M."/>
            <person name="Yatagai F."/>
            <person name="Hanaoka F."/>
        </authorList>
    </citation>
    <scope>DEVELOPMENTAL STAGE</scope>
    <scope>PHOSPHORYLATION</scope>
</reference>
<reference key="9">
    <citation type="journal article" date="2004" name="J. Biol. Chem.">
        <title>Localization of human Mcm10 is spatially and temporally regulated during the S phase.</title>
        <authorList>
            <person name="Izumi M."/>
            <person name="Yatagai F."/>
            <person name="Hanaoka F."/>
        </authorList>
    </citation>
    <scope>FUNCTION</scope>
    <scope>SUBCELLULAR LOCATION</scope>
</reference>
<reference key="10">
    <citation type="journal article" date="2007" name="Genes Dev.">
        <title>Mcm10 and And-1/CTF4 recruit DNA polymerase alpha to chromatin for initiation of DNA replication.</title>
        <authorList>
            <person name="Zhu W."/>
            <person name="Ukomadu C."/>
            <person name="Jha S."/>
            <person name="Senga T."/>
            <person name="Dhar S.K."/>
            <person name="Wohlschlegel J.A."/>
            <person name="Nutt L.K."/>
            <person name="Kornbluth S."/>
            <person name="Dutta A."/>
        </authorList>
    </citation>
    <scope>INTERACTION WITH POLA1 AND WDHD1</scope>
</reference>
<reference key="11">
    <citation type="journal article" date="2007" name="Mol. Biol. Cell">
        <title>Human Mcm10 regulates the catalytic subunit of DNA polymerase-alpha and prevents DNA damage during replication.</title>
        <authorList>
            <person name="Chattopadhyay S."/>
            <person name="Bielinsky A.K."/>
        </authorList>
    </citation>
    <scope>FUNCTION</scope>
</reference>
<reference key="12">
    <citation type="journal article" date="2007" name="Science">
        <title>ATM and ATR substrate analysis reveals extensive protein networks responsive to DNA damage.</title>
        <authorList>
            <person name="Matsuoka S."/>
            <person name="Ballif B.A."/>
            <person name="Smogorzewska A."/>
            <person name="McDonald E.R. III"/>
            <person name="Hurov K.E."/>
            <person name="Luo J."/>
            <person name="Bakalarski C.E."/>
            <person name="Zhao Z."/>
            <person name="Solimini N."/>
            <person name="Lerenthal Y."/>
            <person name="Shiloh Y."/>
            <person name="Gygi S.P."/>
            <person name="Elledge S.J."/>
        </authorList>
    </citation>
    <scope>PHOSPHORYLATION [LARGE SCALE ANALYSIS] AT THR-85</scope>
    <scope>IDENTIFICATION BY MASS SPECTROMETRY [LARGE SCALE ANALYSIS]</scope>
    <source>
        <tissue>Embryonic kidney</tissue>
    </source>
</reference>
<reference key="13">
    <citation type="journal article" date="2008" name="Proc. Natl. Acad. Sci. U.S.A.">
        <title>A quantitative atlas of mitotic phosphorylation.</title>
        <authorList>
            <person name="Dephoure N."/>
            <person name="Zhou C."/>
            <person name="Villen J."/>
            <person name="Beausoleil S.A."/>
            <person name="Bakalarski C.E."/>
            <person name="Elledge S.J."/>
            <person name="Gygi S.P."/>
        </authorList>
    </citation>
    <scope>PHOSPHORYLATION [LARGE SCALE ANALYSIS] AT THR-85 AND SER-93</scope>
    <scope>IDENTIFICATION BY MASS SPECTROMETRY [LARGE SCALE ANALYSIS]</scope>
    <source>
        <tissue>Cervix carcinoma</tissue>
    </source>
</reference>
<reference key="14">
    <citation type="journal article" date="2009" name="EMBO J.">
        <title>MCM10 mediates RECQ4 association with MCM2-7 helicase complex during DNA replication.</title>
        <authorList>
            <person name="Xu X."/>
            <person name="Rochette P.J."/>
            <person name="Feyissa E.A."/>
            <person name="Su T.V."/>
            <person name="Liu Y."/>
        </authorList>
    </citation>
    <scope>INTERACTION WITH RECQL4</scope>
</reference>
<reference key="15">
    <citation type="journal article" date="2009" name="J. Biol. Chem.">
        <title>Physical interactions between Mcm10, DNA, and DNA polymerase alpha.</title>
        <authorList>
            <person name="Warren E.M."/>
            <person name="Huang H."/>
            <person name="Fanning E."/>
            <person name="Chazin W.J."/>
            <person name="Eichman B.F."/>
        </authorList>
    </citation>
    <scope>FUNCTION</scope>
</reference>
<reference key="16">
    <citation type="journal article" date="2009" name="Sci. Signal.">
        <title>Quantitative phosphoproteomic analysis of T cell receptor signaling reveals system-wide modulation of protein-protein interactions.</title>
        <authorList>
            <person name="Mayya V."/>
            <person name="Lundgren D.H."/>
            <person name="Hwang S.-I."/>
            <person name="Rezaul K."/>
            <person name="Wu L."/>
            <person name="Eng J.K."/>
            <person name="Rodionov V."/>
            <person name="Han D.K."/>
        </authorList>
    </citation>
    <scope>PHOSPHORYLATION [LARGE SCALE ANALYSIS] AT THR-85</scope>
    <scope>IDENTIFICATION BY MASS SPECTROMETRY [LARGE SCALE ANALYSIS]</scope>
    <source>
        <tissue>Leukemic T-cell</tissue>
    </source>
</reference>
<reference key="17">
    <citation type="journal article" date="2014" name="Cell Rep.">
        <title>The RBBP6/ZBTB38/MCM10 axis regulates DNA replication and common fragile site stability.</title>
        <authorList>
            <person name="Miotto B."/>
            <person name="Chibi M."/>
            <person name="Xie P."/>
            <person name="Koundrioukoff S."/>
            <person name="Moolman-Smook H."/>
            <person name="Pugh D."/>
            <person name="Debatisse M."/>
            <person name="He F."/>
            <person name="Zhang L."/>
            <person name="Defossez P.A."/>
        </authorList>
    </citation>
    <scope>FUNCTION</scope>
</reference>
<reference key="18">
    <citation type="journal article" date="2014" name="Nat. Struct. Mol. Biol.">
        <title>Uncovering global SUMOylation signaling networks in a site-specific manner.</title>
        <authorList>
            <person name="Hendriks I.A."/>
            <person name="D'Souza R.C."/>
            <person name="Yang B."/>
            <person name="Verlaan-de Vries M."/>
            <person name="Mann M."/>
            <person name="Vertegaal A.C."/>
        </authorList>
    </citation>
    <scope>SUMOYLATION [LARGE SCALE ANALYSIS] AT LYS-762</scope>
    <scope>IDENTIFICATION BY MASS SPECTROMETRY [LARGE SCALE ANALYSIS]</scope>
</reference>
<reference key="19">
    <citation type="journal article" date="2017" name="Nat. Struct. Mol. Biol.">
        <title>Site-specific mapping of the human SUMO proteome reveals co-modification with phosphorylation.</title>
        <authorList>
            <person name="Hendriks I.A."/>
            <person name="Lyon D."/>
            <person name="Young C."/>
            <person name="Jensen L.J."/>
            <person name="Vertegaal A.C."/>
            <person name="Nielsen M.L."/>
        </authorList>
    </citation>
    <scope>SUMOYLATION [LARGE SCALE ANALYSIS] AT LYS-493; LYS-627; LYS-762 AND LYS-763</scope>
    <scope>IDENTIFICATION BY MASS SPECTROMETRY [LARGE SCALE ANALYSIS]</scope>
</reference>
<reference key="20">
    <citation type="journal article" date="2020" name="J. Clin. Invest.">
        <title>Human NK cell deficiency as a result of biallelic mutations in MCM10.</title>
        <authorList>
            <person name="Mace E.M."/>
            <person name="Paust S."/>
            <person name="Conte M.I."/>
            <person name="Baxley R.M."/>
            <person name="Schmit M.M."/>
            <person name="Patil S.L."/>
            <person name="Guilz N.C."/>
            <person name="Mukherjee M."/>
            <person name="Pezzi A.E."/>
            <person name="Chmielowiec J."/>
            <person name="Tatineni S."/>
            <person name="Chinn I.K."/>
            <person name="Akdemir Z.C."/>
            <person name="Jhangiani S.N."/>
            <person name="Muzny D.M."/>
            <person name="Stray-Pedersen A."/>
            <person name="Bradley R.E."/>
            <person name="Moody M."/>
            <person name="Connor P.P."/>
            <person name="Heaps A.G."/>
            <person name="Steward C."/>
            <person name="Banerjee P.P."/>
            <person name="Gibbs R.A."/>
            <person name="Borowiak M."/>
            <person name="Lupski J.R."/>
            <person name="Jolles S."/>
            <person name="Bielinsky A.K."/>
            <person name="Orange J.S."/>
        </authorList>
    </citation>
    <scope>INVOLVEMENT IN IMD80</scope>
    <scope>VARIANTS IMD80 CYS-427 AND 583-ARG--LYS-875 DEL</scope>
    <scope>CHARACTERIZATION OF VARIANTS IMD80 CYS-427 AND 583-ARG--LYS-875 DEL</scope>
    <scope>FUNCTION</scope>
    <scope>SUBCELLULAR LOCATION</scope>
</reference>
<gene>
    <name type="primary">MCM10</name>
    <name type="ORF">PRO2249</name>
</gene>
<accession>Q7L590</accession>
<accession>A8K9I6</accession>
<accession>B7ZKZ8</accession>
<accession>Q3MIR3</accession>
<accession>Q7LD55</accession>
<accession>Q96GX4</accession>
<accession>Q96NB6</accession>
<accession>Q9H0D7</accession>
<accession>Q9H3P9</accession>
<accession>Q9P177</accession>
<dbReference type="EMBL" id="AB042719">
    <property type="protein sequence ID" value="BAB18723.1"/>
    <property type="molecule type" value="mRNA"/>
</dbReference>
<dbReference type="EMBL" id="AL136840">
    <property type="protein sequence ID" value="CAB66774.2"/>
    <property type="molecule type" value="mRNA"/>
</dbReference>
<dbReference type="EMBL" id="AK055695">
    <property type="protein sequence ID" value="BAB70988.1"/>
    <property type="molecule type" value="mRNA"/>
</dbReference>
<dbReference type="EMBL" id="AK292701">
    <property type="protein sequence ID" value="BAF85390.1"/>
    <property type="molecule type" value="mRNA"/>
</dbReference>
<dbReference type="EMBL" id="AL355355">
    <property type="status" value="NOT_ANNOTATED_CDS"/>
    <property type="molecule type" value="Genomic_DNA"/>
</dbReference>
<dbReference type="EMBL" id="AL138764">
    <property type="status" value="NOT_ANNOTATED_CDS"/>
    <property type="molecule type" value="Genomic_DNA"/>
</dbReference>
<dbReference type="EMBL" id="CH471072">
    <property type="protein sequence ID" value="EAW86297.1"/>
    <property type="molecule type" value="Genomic_DNA"/>
</dbReference>
<dbReference type="EMBL" id="BC004876">
    <property type="protein sequence ID" value="AAH04876.2"/>
    <property type="molecule type" value="mRNA"/>
</dbReference>
<dbReference type="EMBL" id="BC101727">
    <property type="protein sequence ID" value="AAI01728.1"/>
    <property type="molecule type" value="mRNA"/>
</dbReference>
<dbReference type="EMBL" id="BC143490">
    <property type="protein sequence ID" value="AAI43491.1"/>
    <property type="molecule type" value="mRNA"/>
</dbReference>
<dbReference type="EMBL" id="AF119869">
    <property type="protein sequence ID" value="AAF69623.1"/>
    <property type="status" value="ALT_INIT"/>
    <property type="molecule type" value="mRNA"/>
</dbReference>
<dbReference type="CCDS" id="CCDS7095.1">
    <molecule id="Q7L590-2"/>
</dbReference>
<dbReference type="CCDS" id="CCDS7096.1">
    <molecule id="Q7L590-1"/>
</dbReference>
<dbReference type="RefSeq" id="NP_060988.3">
    <molecule id="Q7L590-2"/>
    <property type="nucleotide sequence ID" value="NM_018518.4"/>
</dbReference>
<dbReference type="RefSeq" id="NP_877428.1">
    <molecule id="Q7L590-1"/>
    <property type="nucleotide sequence ID" value="NM_182751.3"/>
</dbReference>
<dbReference type="RefSeq" id="XP_011517840.1">
    <molecule id="Q7L590-1"/>
    <property type="nucleotide sequence ID" value="XM_011519538.3"/>
</dbReference>
<dbReference type="RefSeq" id="XP_047281393.1">
    <molecule id="Q7L590-2"/>
    <property type="nucleotide sequence ID" value="XM_047425437.1"/>
</dbReference>
<dbReference type="RefSeq" id="XP_054222209.1">
    <molecule id="Q7L590-1"/>
    <property type="nucleotide sequence ID" value="XM_054366234.1"/>
</dbReference>
<dbReference type="RefSeq" id="XP_054222210.1">
    <molecule id="Q7L590-2"/>
    <property type="nucleotide sequence ID" value="XM_054366235.1"/>
</dbReference>
<dbReference type="SMR" id="Q7L590"/>
<dbReference type="BioGRID" id="120654">
    <property type="interactions" value="132"/>
</dbReference>
<dbReference type="FunCoup" id="Q7L590">
    <property type="interactions" value="2810"/>
</dbReference>
<dbReference type="IntAct" id="Q7L590">
    <property type="interactions" value="93"/>
</dbReference>
<dbReference type="MINT" id="Q7L590"/>
<dbReference type="STRING" id="9606.ENSP00000418268"/>
<dbReference type="GlyGen" id="Q7L590">
    <property type="glycosylation" value="1 site, 1 O-linked glycan (1 site)"/>
</dbReference>
<dbReference type="iPTMnet" id="Q7L590"/>
<dbReference type="MetOSite" id="Q7L590"/>
<dbReference type="PhosphoSitePlus" id="Q7L590"/>
<dbReference type="BioMuta" id="MCM10"/>
<dbReference type="DMDM" id="126215746"/>
<dbReference type="CPTAC" id="CPTAC-1210"/>
<dbReference type="CPTAC" id="CPTAC-1211"/>
<dbReference type="jPOST" id="Q7L590"/>
<dbReference type="MassIVE" id="Q7L590"/>
<dbReference type="PaxDb" id="9606-ENSP00000418268"/>
<dbReference type="PeptideAtlas" id="Q7L590"/>
<dbReference type="ProteomicsDB" id="68795">
    <molecule id="Q7L590-1"/>
</dbReference>
<dbReference type="ProteomicsDB" id="68796">
    <molecule id="Q7L590-2"/>
</dbReference>
<dbReference type="Pumba" id="Q7L590"/>
<dbReference type="Antibodypedia" id="11355">
    <property type="antibodies" value="151 antibodies from 25 providers"/>
</dbReference>
<dbReference type="DNASU" id="55388"/>
<dbReference type="Ensembl" id="ENST00000378714.8">
    <molecule id="Q7L590-2"/>
    <property type="protein sequence ID" value="ENSP00000367986.3"/>
    <property type="gene ID" value="ENSG00000065328.17"/>
</dbReference>
<dbReference type="Ensembl" id="ENST00000484800.6">
    <molecule id="Q7L590-1"/>
    <property type="protein sequence ID" value="ENSP00000418268.1"/>
    <property type="gene ID" value="ENSG00000065328.17"/>
</dbReference>
<dbReference type="GeneID" id="55388"/>
<dbReference type="KEGG" id="hsa:55388"/>
<dbReference type="MANE-Select" id="ENST00000378714.8">
    <molecule id="Q7L590-2"/>
    <property type="protein sequence ID" value="ENSP00000367986.3"/>
    <property type="RefSeq nucleotide sequence ID" value="NM_018518.5"/>
    <property type="RefSeq protein sequence ID" value="NP_060988.3"/>
</dbReference>
<dbReference type="UCSC" id="uc001ima.4">
    <molecule id="Q7L590-1"/>
    <property type="organism name" value="human"/>
</dbReference>
<dbReference type="AGR" id="HGNC:18043"/>
<dbReference type="CTD" id="55388"/>
<dbReference type="DisGeNET" id="55388"/>
<dbReference type="GeneCards" id="MCM10"/>
<dbReference type="HGNC" id="HGNC:18043">
    <property type="gene designation" value="MCM10"/>
</dbReference>
<dbReference type="HPA" id="ENSG00000065328">
    <property type="expression patterns" value="Tissue enhanced (bone marrow, lymphoid tissue)"/>
</dbReference>
<dbReference type="MalaCards" id="MCM10"/>
<dbReference type="MIM" id="609357">
    <property type="type" value="gene"/>
</dbReference>
<dbReference type="MIM" id="619313">
    <property type="type" value="phenotype"/>
</dbReference>
<dbReference type="neXtProt" id="NX_Q7L590"/>
<dbReference type="OpenTargets" id="ENSG00000065328"/>
<dbReference type="PharmGKB" id="PA30689"/>
<dbReference type="VEuPathDB" id="HostDB:ENSG00000065328"/>
<dbReference type="eggNOG" id="KOG3056">
    <property type="taxonomic scope" value="Eukaryota"/>
</dbReference>
<dbReference type="GeneTree" id="ENSGT00390000007134"/>
<dbReference type="HOGENOM" id="CLU_014680_0_0_1"/>
<dbReference type="InParanoid" id="Q7L590"/>
<dbReference type="OMA" id="YKMPCKA"/>
<dbReference type="OrthoDB" id="273123at2759"/>
<dbReference type="PAN-GO" id="Q7L590">
    <property type="GO annotations" value="4 GO annotations based on evolutionary models"/>
</dbReference>
<dbReference type="PhylomeDB" id="Q7L590"/>
<dbReference type="TreeFam" id="TF313330"/>
<dbReference type="PathwayCommons" id="Q7L590"/>
<dbReference type="Reactome" id="R-HSA-176187">
    <property type="pathway name" value="Activation of ATR in response to replication stress"/>
</dbReference>
<dbReference type="Reactome" id="R-HSA-68962">
    <property type="pathway name" value="Activation of the pre-replicative complex"/>
</dbReference>
<dbReference type="SignaLink" id="Q7L590"/>
<dbReference type="SIGNOR" id="Q7L590"/>
<dbReference type="BioGRID-ORCS" id="55388">
    <property type="hits" value="362 hits in 1168 CRISPR screens"/>
</dbReference>
<dbReference type="ChiTaRS" id="MCM10">
    <property type="organism name" value="human"/>
</dbReference>
<dbReference type="GeneWiki" id="MCM10"/>
<dbReference type="GenomeRNAi" id="55388"/>
<dbReference type="Pharos" id="Q7L590">
    <property type="development level" value="Tbio"/>
</dbReference>
<dbReference type="PRO" id="PR:Q7L590"/>
<dbReference type="Proteomes" id="UP000005640">
    <property type="component" value="Chromosome 10"/>
</dbReference>
<dbReference type="RNAct" id="Q7L590">
    <property type="molecule type" value="protein"/>
</dbReference>
<dbReference type="Bgee" id="ENSG00000065328">
    <property type="expression patterns" value="Expressed in secondary oocyte and 117 other cell types or tissues"/>
</dbReference>
<dbReference type="ExpressionAtlas" id="Q7L590">
    <property type="expression patterns" value="baseline and differential"/>
</dbReference>
<dbReference type="GO" id="GO:0043596">
    <property type="term" value="C:nuclear replication fork"/>
    <property type="evidence" value="ECO:0000318"/>
    <property type="project" value="GO_Central"/>
</dbReference>
<dbReference type="GO" id="GO:0005730">
    <property type="term" value="C:nucleolus"/>
    <property type="evidence" value="ECO:0000314"/>
    <property type="project" value="HPA"/>
</dbReference>
<dbReference type="GO" id="GO:0005654">
    <property type="term" value="C:nucleoplasm"/>
    <property type="evidence" value="ECO:0000314"/>
    <property type="project" value="HPA"/>
</dbReference>
<dbReference type="GO" id="GO:0005634">
    <property type="term" value="C:nucleus"/>
    <property type="evidence" value="ECO:0000314"/>
    <property type="project" value="UniProtKB"/>
</dbReference>
<dbReference type="GO" id="GO:0003688">
    <property type="term" value="F:DNA replication origin binding"/>
    <property type="evidence" value="ECO:0000318"/>
    <property type="project" value="GO_Central"/>
</dbReference>
<dbReference type="GO" id="GO:0019899">
    <property type="term" value="F:enzyme binding"/>
    <property type="evidence" value="ECO:0007669"/>
    <property type="project" value="Ensembl"/>
</dbReference>
<dbReference type="GO" id="GO:0042802">
    <property type="term" value="F:identical protein binding"/>
    <property type="evidence" value="ECO:0000353"/>
    <property type="project" value="IntAct"/>
</dbReference>
<dbReference type="GO" id="GO:0003697">
    <property type="term" value="F:single-stranded DNA binding"/>
    <property type="evidence" value="ECO:0000318"/>
    <property type="project" value="GO_Central"/>
</dbReference>
<dbReference type="GO" id="GO:0008270">
    <property type="term" value="F:zinc ion binding"/>
    <property type="evidence" value="ECO:0007669"/>
    <property type="project" value="UniProtKB-KW"/>
</dbReference>
<dbReference type="GO" id="GO:0008283">
    <property type="term" value="P:cell population proliferation"/>
    <property type="evidence" value="ECO:0007669"/>
    <property type="project" value="Ensembl"/>
</dbReference>
<dbReference type="GO" id="GO:0006974">
    <property type="term" value="P:DNA damage response"/>
    <property type="evidence" value="ECO:0000315"/>
    <property type="project" value="UniProtKB"/>
</dbReference>
<dbReference type="GO" id="GO:0006270">
    <property type="term" value="P:DNA replication initiation"/>
    <property type="evidence" value="ECO:0000315"/>
    <property type="project" value="UniProtKB"/>
</dbReference>
<dbReference type="FunFam" id="1.20.5.420:FF:000006">
    <property type="entry name" value="Minichromosome maintenance 10 replication initiation factor"/>
    <property type="match status" value="1"/>
</dbReference>
<dbReference type="FunFam" id="2.40.50.140:FF:000167">
    <property type="entry name" value="Minichromosome maintenance 10 replication initiation factor"/>
    <property type="match status" value="1"/>
</dbReference>
<dbReference type="Gene3D" id="1.20.5.420">
    <property type="entry name" value="Immunoglobulin FC, subunit C"/>
    <property type="match status" value="1"/>
</dbReference>
<dbReference type="Gene3D" id="2.40.50.140">
    <property type="entry name" value="Nucleic acid-binding proteins"/>
    <property type="match status" value="1"/>
</dbReference>
<dbReference type="InterPro" id="IPR040184">
    <property type="entry name" value="Mcm10"/>
</dbReference>
<dbReference type="InterPro" id="IPR055065">
    <property type="entry name" value="MCM10_OB"/>
</dbReference>
<dbReference type="InterPro" id="IPR012340">
    <property type="entry name" value="NA-bd_OB-fold"/>
</dbReference>
<dbReference type="InterPro" id="IPR015411">
    <property type="entry name" value="Rep_factor_Mcm10_C"/>
</dbReference>
<dbReference type="InterPro" id="IPR015408">
    <property type="entry name" value="Znf_Mcm10/DnaG"/>
</dbReference>
<dbReference type="InterPro" id="IPR056791">
    <property type="entry name" value="Znf_Mcm10_C"/>
</dbReference>
<dbReference type="PANTHER" id="PTHR13454">
    <property type="entry name" value="PROTEIN MCM10 HOMOLOG"/>
    <property type="match status" value="1"/>
</dbReference>
<dbReference type="PANTHER" id="PTHR13454:SF11">
    <property type="entry name" value="PROTEIN MCM10 HOMOLOG"/>
    <property type="match status" value="1"/>
</dbReference>
<dbReference type="Pfam" id="PF09332">
    <property type="entry name" value="Mcm10"/>
    <property type="match status" value="1"/>
</dbReference>
<dbReference type="Pfam" id="PF22379">
    <property type="entry name" value="MCM10_OB"/>
    <property type="match status" value="1"/>
</dbReference>
<dbReference type="Pfam" id="PF24863">
    <property type="entry name" value="zf-CCCH_Mcm10"/>
    <property type="match status" value="1"/>
</dbReference>
<dbReference type="Pfam" id="PF09329">
    <property type="entry name" value="zf-primase"/>
    <property type="match status" value="1"/>
</dbReference>
<dbReference type="SMART" id="SM01280">
    <property type="entry name" value="Mcm10"/>
    <property type="match status" value="1"/>
</dbReference>
<proteinExistence type="evidence at protein level"/>
<sequence>MDEEEDNLSLLTALLEENESALDCNSEENNFLTRENGEPDAFDELFDADGDGESYTEEADDGETGETRDEKENLATLFGDMEDLTDEEEVPASQSTENRVLPAPAPRREKTNEELQEELRNLQEQMKALQEQLKVTTIKQTASPARLQKSPVEKSPRPPLKERRVQRIQESTCFSAELDVPALPRTKRVARTPKASPPDPKSSSSRMTSAPSQPLQTISRNKPSGITRGQIVGTPGSSGETTQPICVEAFSGLRLRRPRVSSTEMNKKMTGRKLIRLSQIKEKMAREKLEEIDWVTFGVILKKVTPQSVNSGKTFSIWKLNDLRDLTQCVSLFLFGEVHKALWKTEQGTVVGILNANPMKPKDGSEEVCLSIDHPQKVLIMGEALDLGTCKAKKKNGEPCTQTVNLRDCEYCQYHVQAQYKKLSAKRADLQSTFSGGRIPKKFARRGTSLKERLCQDGFYYGGVSSASYAASIAAAVAPKKKIQTTLSNLVVKGTNLIIQETRQKLGIPQKSLSCSEEFKELMDLPTCGARNLKQHLAKATASGIMGSPKPAIKSISASALLKQQKQRMLEMRRRKSEEIQKRFLQSSSEVESPAVPSSSRQPPAQPPRTGSEFPRLEGAPATMTPKLGRGVLEGDDVLFYDESPPPRPKLSALAEAKKLAAITKLRAKGQVLTKTNPNSIKKKQKDPQDILEVKERVEKNTMFSSQAEDELEPARKKRREQLAYLESEEFQKILKAKSKHTGILKEAEAEMQERYFEPLVKKEQMEEKMRNIREVKCRVVTCKTCAYTHFKLLETCVSEQHEYHWHDGVKRFFKCPCGNRSISLDRLPNKHCSNCGLYKWERDGMLKEKTGPKIGGETLLPRGEEHAKFLNSLK</sequence>
<comment type="function">
    <text evidence="6 10 12 14 16 17">Acts as a replication initiation factor that brings together the MCM2-7 helicase and the DNA polymerase alpha/primase complex in order to initiate DNA replication. Additionally, plays a role in preventing DNA damage during replication. Key effector of the RBBP6 and ZBTB38-mediated regulation of DNA-replication and common fragile sites stability; acts as a direct target of transcriptional repression by ZBTB38 (PubMed:24726359).</text>
</comment>
<comment type="subunit">
    <text evidence="3 6 13 15">Self-associates (By similarity). Interacts with ORC2. May interact with MCM2 and MCM6. Interacts with the DNA polymerase alpha subunit POLA1. Interacts with RECQL4; this interaction regulates RECQL4 unwinding activity. Interacts with WDHD1.</text>
</comment>
<comment type="interaction">
    <interactant intactId="EBI-374912">
        <id>Q7L590</id>
    </interactant>
    <interactant intactId="EBI-374912">
        <id>Q7L590</id>
        <label>MCM10</label>
    </interactant>
    <organismsDiffer>false</organismsDiffer>
    <experiments>2</experiments>
</comment>
<comment type="interaction">
    <interactant intactId="EBI-374912">
        <id>Q7L590</id>
    </interactant>
    <interactant intactId="EBI-374900">
        <id>Q14566</id>
        <label>MCM6</label>
    </interactant>
    <organismsDiffer>false</organismsDiffer>
    <experiments>3</experiments>
</comment>
<comment type="interaction">
    <interactant intactId="EBI-374912">
        <id>Q7L590</id>
    </interactant>
    <interactant intactId="EBI-374957">
        <id>Q13416</id>
        <label>ORC2</label>
    </interactant>
    <organismsDiffer>false</organismsDiffer>
    <experiments>5</experiments>
</comment>
<comment type="interaction">
    <interactant intactId="EBI-10233517">
        <id>Q7L590-2</id>
    </interactant>
    <interactant intactId="EBI-618309">
        <id>Q08379</id>
        <label>GOLGA2</label>
    </interactant>
    <organismsDiffer>false</organismsDiffer>
    <experiments>3</experiments>
</comment>
<comment type="interaction">
    <interactant intactId="EBI-10233517">
        <id>Q7L590-2</id>
    </interactant>
    <interactant intactId="EBI-7851314">
        <id>Q2TBA0</id>
        <label>KLHL40</label>
    </interactant>
    <organismsDiffer>false</organismsDiffer>
    <experiments>4</experiments>
</comment>
<comment type="interaction">
    <interactant intactId="EBI-10233517">
        <id>Q7L590-2</id>
    </interactant>
    <interactant intactId="EBI-374900">
        <id>Q14566</id>
        <label>MCM6</label>
    </interactant>
    <organismsDiffer>false</organismsDiffer>
    <experiments>4</experiments>
</comment>
<comment type="interaction">
    <interactant intactId="EBI-10233517">
        <id>Q7L590-2</id>
    </interactant>
    <interactant intactId="EBI-79165">
        <id>Q9NRD5</id>
        <label>PICK1</label>
    </interactant>
    <organismsDiffer>false</organismsDiffer>
    <experiments>3</experiments>
</comment>
<comment type="interaction">
    <interactant intactId="EBI-10233517">
        <id>Q7L590-2</id>
    </interactant>
    <interactant intactId="EBI-749370">
        <id>Q9BSL1</id>
        <label>UBAC1</label>
    </interactant>
    <organismsDiffer>false</organismsDiffer>
    <experiments>3</experiments>
</comment>
<comment type="subcellular location">
    <subcellularLocation>
        <location evidence="6 10 17">Nucleus</location>
    </subcellularLocation>
    <text>Colocalizes with ORC2 in nuclei foci. Associated with chromatin in S phase. From early to mid-S phase located in discrete nuclear foci. In early S phase, several hundred foci appeared throughout the nucleus. In mid-S phase, the foci appeared at the nuclear periphery and nucleolar regions. In the late S and G phases localized to nucleoli.</text>
</comment>
<comment type="alternative products">
    <event type="alternative splicing"/>
    <isoform>
        <id>Q7L590-1</id>
        <name>1</name>
        <sequence type="displayed"/>
    </isoform>
    <isoform>
        <id>Q7L590-2</id>
        <name>2</name>
        <sequence type="described" ref="VSP_029951"/>
    </isoform>
</comment>
<comment type="developmental stage">
    <text evidence="6 8">Expression is cell cycle regulated. Expression increases at the G1/S-boundary. Expression decreases in late M phase, remains low during G(1) phase, and starts to accumulate at the onset of S phase.</text>
</comment>
<comment type="domain">
    <text evidence="3">Each zinc finger-like domain binds a zinc ion and is involved in both ssDNA and dsDNA binding, as is the OB-fold domain.</text>
</comment>
<comment type="domain">
    <text evidence="3">The N-terminal domain mediates homodimerization.</text>
</comment>
<comment type="disease" evidence="17">
    <disease id="DI-06100">
        <name>Immunodeficiency 80 with or without congenital cardiomyopathy</name>
        <acronym>IMD80</acronym>
        <description>An autosomal recessive immunologic disorder with variable manifestations including decreased B and T cells, reduced effector and memory T cells, NK cell deficiency, chronic cytomegalovirus infection. Restrictive cardiomyopathy and hypoplasia of the spleen and thymus have also been reported in some patients.</description>
        <dbReference type="MIM" id="619313"/>
    </disease>
    <text>The disease is caused by variants affecting the gene represented in this entry.</text>
</comment>
<comment type="similarity">
    <text evidence="21">Belongs to the MCM10 family.</text>
</comment>
<comment type="sequence caution" evidence="21">
    <conflict type="erroneous initiation">
        <sequence resource="EMBL-CDS" id="AAF69623"/>
    </conflict>
    <text>Truncated N-terminus.</text>
</comment>
<protein>
    <recommendedName>
        <fullName>Protein MCM10 homolog</fullName>
        <shortName>HsMCM10</shortName>
    </recommendedName>
</protein>
<keyword id="KW-0025">Alternative splicing</keyword>
<keyword id="KW-0175">Coiled coil</keyword>
<keyword id="KW-0225">Disease variant</keyword>
<keyword id="KW-0227">DNA damage</keyword>
<keyword id="KW-0235">DNA replication</keyword>
<keyword id="KW-0238">DNA-binding</keyword>
<keyword id="KW-1017">Isopeptide bond</keyword>
<keyword id="KW-0479">Metal-binding</keyword>
<keyword id="KW-0539">Nucleus</keyword>
<keyword id="KW-0597">Phosphoprotein</keyword>
<keyword id="KW-1267">Proteomics identification</keyword>
<keyword id="KW-1185">Reference proteome</keyword>
<keyword id="KW-0832">Ubl conjugation</keyword>
<keyword id="KW-0862">Zinc</keyword>
<keyword id="KW-0863">Zinc-finger</keyword>
<name>MCM10_HUMAN</name>